<dbReference type="EMBL" id="AF176245">
    <property type="protein sequence ID" value="AAD51118.1"/>
    <property type="molecule type" value="Genomic_DNA"/>
</dbReference>
<dbReference type="EMBL" id="AP009380">
    <property type="protein sequence ID" value="BAG32560.1"/>
    <property type="molecule type" value="Genomic_DNA"/>
</dbReference>
<dbReference type="RefSeq" id="WP_012457189.1">
    <property type="nucleotide sequence ID" value="NC_010729.1"/>
</dbReference>
<dbReference type="SMR" id="B2RGR5"/>
<dbReference type="GeneID" id="29255298"/>
<dbReference type="KEGG" id="pgn:PGN_0041"/>
<dbReference type="eggNOG" id="COG0326">
    <property type="taxonomic scope" value="Bacteria"/>
</dbReference>
<dbReference type="HOGENOM" id="CLU_006684_3_2_10"/>
<dbReference type="OrthoDB" id="9802640at2"/>
<dbReference type="BioCyc" id="PGIN431947:G1G2V-43-MONOMER"/>
<dbReference type="Proteomes" id="UP000008842">
    <property type="component" value="Chromosome"/>
</dbReference>
<dbReference type="GO" id="GO:0005737">
    <property type="term" value="C:cytoplasm"/>
    <property type="evidence" value="ECO:0007669"/>
    <property type="project" value="UniProtKB-SubCell"/>
</dbReference>
<dbReference type="GO" id="GO:0005524">
    <property type="term" value="F:ATP binding"/>
    <property type="evidence" value="ECO:0007669"/>
    <property type="project" value="UniProtKB-UniRule"/>
</dbReference>
<dbReference type="GO" id="GO:0016887">
    <property type="term" value="F:ATP hydrolysis activity"/>
    <property type="evidence" value="ECO:0007669"/>
    <property type="project" value="InterPro"/>
</dbReference>
<dbReference type="GO" id="GO:0140662">
    <property type="term" value="F:ATP-dependent protein folding chaperone"/>
    <property type="evidence" value="ECO:0007669"/>
    <property type="project" value="InterPro"/>
</dbReference>
<dbReference type="GO" id="GO:0051082">
    <property type="term" value="F:unfolded protein binding"/>
    <property type="evidence" value="ECO:0007669"/>
    <property type="project" value="UniProtKB-UniRule"/>
</dbReference>
<dbReference type="CDD" id="cd16927">
    <property type="entry name" value="HATPase_Hsp90-like"/>
    <property type="match status" value="1"/>
</dbReference>
<dbReference type="FunFam" id="3.30.230.80:FF:000008">
    <property type="entry name" value="Molecular chaperone HtpG"/>
    <property type="match status" value="1"/>
</dbReference>
<dbReference type="FunFam" id="3.30.565.10:FF:000076">
    <property type="entry name" value="Molecular chaperone HtpG"/>
    <property type="match status" value="1"/>
</dbReference>
<dbReference type="Gene3D" id="3.30.230.80">
    <property type="match status" value="1"/>
</dbReference>
<dbReference type="Gene3D" id="3.40.50.11260">
    <property type="match status" value="1"/>
</dbReference>
<dbReference type="Gene3D" id="3.30.565.10">
    <property type="entry name" value="Histidine kinase-like ATPase, C-terminal domain"/>
    <property type="match status" value="1"/>
</dbReference>
<dbReference type="HAMAP" id="MF_00505">
    <property type="entry name" value="HSP90"/>
    <property type="match status" value="1"/>
</dbReference>
<dbReference type="InterPro" id="IPR036890">
    <property type="entry name" value="HATPase_C_sf"/>
</dbReference>
<dbReference type="InterPro" id="IPR001404">
    <property type="entry name" value="Hsp90_fam"/>
</dbReference>
<dbReference type="InterPro" id="IPR020575">
    <property type="entry name" value="Hsp90_N"/>
</dbReference>
<dbReference type="InterPro" id="IPR020568">
    <property type="entry name" value="Ribosomal_Su5_D2-typ_SF"/>
</dbReference>
<dbReference type="NCBIfam" id="NF003555">
    <property type="entry name" value="PRK05218.1"/>
    <property type="match status" value="1"/>
</dbReference>
<dbReference type="PANTHER" id="PTHR11528">
    <property type="entry name" value="HEAT SHOCK PROTEIN 90 FAMILY MEMBER"/>
    <property type="match status" value="1"/>
</dbReference>
<dbReference type="Pfam" id="PF13589">
    <property type="entry name" value="HATPase_c_3"/>
    <property type="match status" value="1"/>
</dbReference>
<dbReference type="Pfam" id="PF00183">
    <property type="entry name" value="HSP90"/>
    <property type="match status" value="1"/>
</dbReference>
<dbReference type="PIRSF" id="PIRSF002583">
    <property type="entry name" value="Hsp90"/>
    <property type="match status" value="1"/>
</dbReference>
<dbReference type="PRINTS" id="PR00775">
    <property type="entry name" value="HEATSHOCK90"/>
</dbReference>
<dbReference type="SMART" id="SM00387">
    <property type="entry name" value="HATPase_c"/>
    <property type="match status" value="1"/>
</dbReference>
<dbReference type="SUPFAM" id="SSF55874">
    <property type="entry name" value="ATPase domain of HSP90 chaperone/DNA topoisomerase II/histidine kinase"/>
    <property type="match status" value="1"/>
</dbReference>
<dbReference type="SUPFAM" id="SSF54211">
    <property type="entry name" value="Ribosomal protein S5 domain 2-like"/>
    <property type="match status" value="1"/>
</dbReference>
<comment type="function">
    <text evidence="1">Molecular chaperone. Has ATPase activity.</text>
</comment>
<comment type="subunit">
    <text evidence="1">Homodimer.</text>
</comment>
<comment type="subcellular location">
    <subcellularLocation>
        <location evidence="1">Cytoplasm</location>
    </subcellularLocation>
</comment>
<comment type="similarity">
    <text evidence="1">Belongs to the heat shock protein 90 family.</text>
</comment>
<accession>B2RGR5</accession>
<accession>Q9S3Q2</accession>
<feature type="chain" id="PRO_0000370694" description="Chaperone protein HtpG">
    <location>
        <begin position="1"/>
        <end position="684"/>
    </location>
</feature>
<feature type="region of interest" description="A; substrate-binding" evidence="1">
    <location>
        <begin position="1"/>
        <end position="329"/>
    </location>
</feature>
<feature type="region of interest" description="B" evidence="1">
    <location>
        <begin position="330"/>
        <end position="548"/>
    </location>
</feature>
<feature type="region of interest" description="C" evidence="1">
    <location>
        <begin position="549"/>
        <end position="684"/>
    </location>
</feature>
<feature type="sequence conflict" description="In Ref. 1; AAD51118." evidence="2" ref="1">
    <original>K</original>
    <variation>E</variation>
    <location>
        <position position="27"/>
    </location>
</feature>
<feature type="sequence conflict" description="In Ref. 1; AAD51118." evidence="2" ref="1">
    <original>K</original>
    <variation>R</variation>
    <location>
        <position position="576"/>
    </location>
</feature>
<feature type="sequence conflict" description="In Ref. 1; AAD51118." evidence="2" ref="1">
    <original>T</original>
    <variation>A</variation>
    <location>
        <position position="601"/>
    </location>
</feature>
<reference key="1">
    <citation type="journal article" date="2000" name="Infect. Immun.">
        <title>Characterization of heat-inducible expression and cloning of HtpG (Hsp90 homologue) of Porphyromonas gingivalis.</title>
        <authorList>
            <person name="Lopatin D.E."/>
            <person name="Combs A."/>
            <person name="Sweier D.G."/>
            <person name="Fenno J.C."/>
            <person name="Dhamija S."/>
        </authorList>
    </citation>
    <scope>NUCLEOTIDE SEQUENCE [GENOMIC DNA]</scope>
</reference>
<reference key="2">
    <citation type="journal article" date="2008" name="DNA Res.">
        <title>Determination of the genome sequence of Porphyromonas gingivalis strain ATCC 33277 and genomic comparison with strain W83 revealed extensive genome rearrangements in P. gingivalis.</title>
        <authorList>
            <person name="Naito M."/>
            <person name="Hirakawa H."/>
            <person name="Yamashita A."/>
            <person name="Ohara N."/>
            <person name="Shoji M."/>
            <person name="Yukitake H."/>
            <person name="Nakayama K."/>
            <person name="Toh H."/>
            <person name="Yoshimura F."/>
            <person name="Kuhara S."/>
            <person name="Hattori M."/>
            <person name="Hayashi T."/>
            <person name="Nakayama K."/>
        </authorList>
    </citation>
    <scope>NUCLEOTIDE SEQUENCE [LARGE SCALE GENOMIC DNA]</scope>
    <source>
        <strain>ATCC 33277 / DSM 20709 / CIP 103683 / JCM 12257 / NCTC 11834 / 2561</strain>
    </source>
</reference>
<keyword id="KW-0067">ATP-binding</keyword>
<keyword id="KW-0143">Chaperone</keyword>
<keyword id="KW-0963">Cytoplasm</keyword>
<keyword id="KW-0547">Nucleotide-binding</keyword>
<keyword id="KW-0346">Stress response</keyword>
<sequence>MSKKGTIGVTSDNIFPVIKKFLYSDHKIFLREIVSNAVDATQKLKTLTSVGEFKGETGDLRVTVSVDEVARTITVSDRGVGMTEEEVEKYINQIAFSSAEEFLEKYKDDKAAIIGHFGLGFYSAFMVSERVDVITRSFREDATAVKWSCDGSPEYTLEPADKADRGTDIVMHIDEENSEFLKKEKIEGLLGKYCKFLTVPIIFGKKQEWKDGKMQDTDEDNQINDTHPAWTKKPADLKDEDYKEFYRSLYPMSEEPLFWIHLNVDYPFNLTGILYFPKIKNNLDLQRNKIQLYCNQVYVTDEVQGIVPDFLTLLHGVIDSPDIPLNVSRSYLQSDANVKKISSHITKKVADRLEEIFKNDRPTFEEKWDSLKLFVEYGMLTDEKFYERAAKFFLFTDMDGHKYTFDEYRTLVEGVQTDKDGQVVYLYATDKHGQYSHVKRASDKGYSVMLLDGQLDPHIVSLLEQKLEKTHFVRVDSDTINNLIRKEERAEVKLSDTERATLVKLFEARLPRDEKKHFNVAFESLGAEGEAILITQAEFMRRMRDMAQLQPGMSFYGELPDSYNLVLNTDHPLIDKVLSGEKESVEPSLTELRAKIAELKTEEAKLLDEEKGKKPEEIPVATKEAKENNAVEQAKTEGSINDQLTKYAQDNELIGQLIDLALLGSGLLTGEALAEFIRRSQRLL</sequence>
<protein>
    <recommendedName>
        <fullName evidence="1">Chaperone protein HtpG</fullName>
    </recommendedName>
    <alternativeName>
        <fullName evidence="1">Heat shock protein HtpG</fullName>
    </alternativeName>
    <alternativeName>
        <fullName evidence="1">High temperature protein G</fullName>
    </alternativeName>
</protein>
<name>HTPG_PORG3</name>
<organism>
    <name type="scientific">Porphyromonas gingivalis (strain ATCC 33277 / DSM 20709 / CIP 103683 / JCM 12257 / NCTC 11834 / 2561)</name>
    <dbReference type="NCBI Taxonomy" id="431947"/>
    <lineage>
        <taxon>Bacteria</taxon>
        <taxon>Pseudomonadati</taxon>
        <taxon>Bacteroidota</taxon>
        <taxon>Bacteroidia</taxon>
        <taxon>Bacteroidales</taxon>
        <taxon>Porphyromonadaceae</taxon>
        <taxon>Porphyromonas</taxon>
    </lineage>
</organism>
<gene>
    <name evidence="1" type="primary">htpG</name>
    <name type="ordered locus">PGN_0041</name>
</gene>
<evidence type="ECO:0000255" key="1">
    <source>
        <dbReference type="HAMAP-Rule" id="MF_00505"/>
    </source>
</evidence>
<evidence type="ECO:0000305" key="2"/>
<proteinExistence type="inferred from homology"/>